<accession>A5UF43</accession>
<sequence length="243" mass="27336">MLFALPALNDNYIWLYQRENLPLIIVDLPETDKLFAWLDKQNATVEAVLLTHEHDDHTQGVSAFKKRYPTVPIYGPQECEKKGATQIVNEGKILTANYQIDVIPTGGHTKQHVSFLVDNHLFCGDALFSAGCGRVFTGNYALMFEGLQRLNTLPDETIVCPAHEYTLGNLAFAETVLVDKSAVEKSAVEKSAVEKQRIFVETQRAENKPSLPTTLKLEREINPFLQAKTLEEFTALRKAKDIF</sequence>
<keyword id="KW-0378">Hydrolase</keyword>
<keyword id="KW-0479">Metal-binding</keyword>
<keyword id="KW-0862">Zinc</keyword>
<organism>
    <name type="scientific">Haemophilus influenzae (strain PittGG)</name>
    <dbReference type="NCBI Taxonomy" id="374931"/>
    <lineage>
        <taxon>Bacteria</taxon>
        <taxon>Pseudomonadati</taxon>
        <taxon>Pseudomonadota</taxon>
        <taxon>Gammaproteobacteria</taxon>
        <taxon>Pasteurellales</taxon>
        <taxon>Pasteurellaceae</taxon>
        <taxon>Haemophilus</taxon>
    </lineage>
</organism>
<gene>
    <name evidence="1" type="primary">gloB</name>
    <name type="ordered locus">CGSHiGG_01615</name>
</gene>
<proteinExistence type="inferred from homology"/>
<evidence type="ECO:0000255" key="1">
    <source>
        <dbReference type="HAMAP-Rule" id="MF_01374"/>
    </source>
</evidence>
<feature type="chain" id="PRO_0000309649" description="Hydroxyacylglutathione hydrolase">
    <location>
        <begin position="1"/>
        <end position="243"/>
    </location>
</feature>
<feature type="binding site" evidence="1">
    <location>
        <position position="52"/>
    </location>
    <ligand>
        <name>Zn(2+)</name>
        <dbReference type="ChEBI" id="CHEBI:29105"/>
        <label>1</label>
    </ligand>
</feature>
<feature type="binding site" evidence="1">
    <location>
        <position position="54"/>
    </location>
    <ligand>
        <name>Zn(2+)</name>
        <dbReference type="ChEBI" id="CHEBI:29105"/>
        <label>1</label>
    </ligand>
</feature>
<feature type="binding site" evidence="1">
    <location>
        <position position="56"/>
    </location>
    <ligand>
        <name>Zn(2+)</name>
        <dbReference type="ChEBI" id="CHEBI:29105"/>
        <label>2</label>
    </ligand>
</feature>
<feature type="binding site" evidence="1">
    <location>
        <position position="57"/>
    </location>
    <ligand>
        <name>Zn(2+)</name>
        <dbReference type="ChEBI" id="CHEBI:29105"/>
        <label>2</label>
    </ligand>
</feature>
<feature type="binding site" evidence="1">
    <location>
        <position position="108"/>
    </location>
    <ligand>
        <name>Zn(2+)</name>
        <dbReference type="ChEBI" id="CHEBI:29105"/>
        <label>1</label>
    </ligand>
</feature>
<feature type="binding site" evidence="1">
    <location>
        <position position="125"/>
    </location>
    <ligand>
        <name>Zn(2+)</name>
        <dbReference type="ChEBI" id="CHEBI:29105"/>
        <label>1</label>
    </ligand>
</feature>
<feature type="binding site" evidence="1">
    <location>
        <position position="125"/>
    </location>
    <ligand>
        <name>Zn(2+)</name>
        <dbReference type="ChEBI" id="CHEBI:29105"/>
        <label>2</label>
    </ligand>
</feature>
<feature type="binding site" evidence="1">
    <location>
        <position position="163"/>
    </location>
    <ligand>
        <name>Zn(2+)</name>
        <dbReference type="ChEBI" id="CHEBI:29105"/>
        <label>2</label>
    </ligand>
</feature>
<name>GLO2_HAEIG</name>
<reference key="1">
    <citation type="journal article" date="2007" name="Genome Biol.">
        <title>Characterization and modeling of the Haemophilus influenzae core and supragenomes based on the complete genomic sequences of Rd and 12 clinical nontypeable strains.</title>
        <authorList>
            <person name="Hogg J.S."/>
            <person name="Hu F.Z."/>
            <person name="Janto B."/>
            <person name="Boissy R."/>
            <person name="Hayes J."/>
            <person name="Keefe R."/>
            <person name="Post J.C."/>
            <person name="Ehrlich G.D."/>
        </authorList>
    </citation>
    <scope>NUCLEOTIDE SEQUENCE [LARGE SCALE GENOMIC DNA]</scope>
    <source>
        <strain>PittGG</strain>
    </source>
</reference>
<protein>
    <recommendedName>
        <fullName evidence="1">Hydroxyacylglutathione hydrolase</fullName>
        <ecNumber evidence="1">3.1.2.6</ecNumber>
    </recommendedName>
    <alternativeName>
        <fullName evidence="1">Glyoxalase II</fullName>
        <shortName evidence="1">Glx II</shortName>
    </alternativeName>
</protein>
<comment type="function">
    <text evidence="1">Thiolesterase that catalyzes the hydrolysis of S-D-lactoyl-glutathione to form glutathione and D-lactic acid.</text>
</comment>
<comment type="catalytic activity">
    <reaction evidence="1">
        <text>an S-(2-hydroxyacyl)glutathione + H2O = a 2-hydroxy carboxylate + glutathione + H(+)</text>
        <dbReference type="Rhea" id="RHEA:21864"/>
        <dbReference type="ChEBI" id="CHEBI:15377"/>
        <dbReference type="ChEBI" id="CHEBI:15378"/>
        <dbReference type="ChEBI" id="CHEBI:57925"/>
        <dbReference type="ChEBI" id="CHEBI:58896"/>
        <dbReference type="ChEBI" id="CHEBI:71261"/>
        <dbReference type="EC" id="3.1.2.6"/>
    </reaction>
</comment>
<comment type="cofactor">
    <cofactor evidence="1">
        <name>Zn(2+)</name>
        <dbReference type="ChEBI" id="CHEBI:29105"/>
    </cofactor>
    <text evidence="1">Binds 2 Zn(2+) ions per subunit.</text>
</comment>
<comment type="pathway">
    <text evidence="1">Secondary metabolite metabolism; methylglyoxal degradation; (R)-lactate from methylglyoxal: step 2/2.</text>
</comment>
<comment type="subunit">
    <text evidence="1">Monomer.</text>
</comment>
<comment type="similarity">
    <text evidence="1">Belongs to the metallo-beta-lactamase superfamily. Glyoxalase II family.</text>
</comment>
<dbReference type="EC" id="3.1.2.6" evidence="1"/>
<dbReference type="EMBL" id="CP000672">
    <property type="protein sequence ID" value="ABQ99398.1"/>
    <property type="molecule type" value="Genomic_DNA"/>
</dbReference>
<dbReference type="SMR" id="A5UF43"/>
<dbReference type="KEGG" id="hiq:CGSHiGG_01615"/>
<dbReference type="HOGENOM" id="CLU_030571_4_1_6"/>
<dbReference type="UniPathway" id="UPA00619">
    <property type="reaction ID" value="UER00676"/>
</dbReference>
<dbReference type="Proteomes" id="UP000001990">
    <property type="component" value="Chromosome"/>
</dbReference>
<dbReference type="GO" id="GO:0004416">
    <property type="term" value="F:hydroxyacylglutathione hydrolase activity"/>
    <property type="evidence" value="ECO:0007669"/>
    <property type="project" value="UniProtKB-UniRule"/>
</dbReference>
<dbReference type="GO" id="GO:0046872">
    <property type="term" value="F:metal ion binding"/>
    <property type="evidence" value="ECO:0007669"/>
    <property type="project" value="UniProtKB-KW"/>
</dbReference>
<dbReference type="GO" id="GO:0019243">
    <property type="term" value="P:methylglyoxal catabolic process to D-lactate via S-lactoyl-glutathione"/>
    <property type="evidence" value="ECO:0007669"/>
    <property type="project" value="InterPro"/>
</dbReference>
<dbReference type="CDD" id="cd07723">
    <property type="entry name" value="hydroxyacylglutathione_hydrolase_MBL-fold"/>
    <property type="match status" value="1"/>
</dbReference>
<dbReference type="Gene3D" id="3.60.15.10">
    <property type="entry name" value="Ribonuclease Z/Hydroxyacylglutathione hydrolase-like"/>
    <property type="match status" value="1"/>
</dbReference>
<dbReference type="HAMAP" id="MF_01374">
    <property type="entry name" value="Glyoxalase_2"/>
    <property type="match status" value="1"/>
</dbReference>
<dbReference type="InterPro" id="IPR035680">
    <property type="entry name" value="Clx_II_MBL"/>
</dbReference>
<dbReference type="InterPro" id="IPR050110">
    <property type="entry name" value="Glyoxalase_II_hydrolase"/>
</dbReference>
<dbReference type="InterPro" id="IPR032282">
    <property type="entry name" value="HAGH_C"/>
</dbReference>
<dbReference type="InterPro" id="IPR017782">
    <property type="entry name" value="Hydroxyacylglutathione_Hdrlase"/>
</dbReference>
<dbReference type="InterPro" id="IPR001279">
    <property type="entry name" value="Metallo-B-lactamas"/>
</dbReference>
<dbReference type="InterPro" id="IPR036866">
    <property type="entry name" value="RibonucZ/Hydroxyglut_hydro"/>
</dbReference>
<dbReference type="NCBIfam" id="TIGR03413">
    <property type="entry name" value="GSH_gloB"/>
    <property type="match status" value="1"/>
</dbReference>
<dbReference type="PANTHER" id="PTHR43705">
    <property type="entry name" value="HYDROXYACYLGLUTATHIONE HYDROLASE"/>
    <property type="match status" value="1"/>
</dbReference>
<dbReference type="PANTHER" id="PTHR43705:SF1">
    <property type="entry name" value="HYDROXYACYLGLUTATHIONE HYDROLASE GLOB"/>
    <property type="match status" value="1"/>
</dbReference>
<dbReference type="Pfam" id="PF16123">
    <property type="entry name" value="HAGH_C"/>
    <property type="match status" value="1"/>
</dbReference>
<dbReference type="Pfam" id="PF00753">
    <property type="entry name" value="Lactamase_B"/>
    <property type="match status" value="1"/>
</dbReference>
<dbReference type="SMART" id="SM00849">
    <property type="entry name" value="Lactamase_B"/>
    <property type="match status" value="1"/>
</dbReference>
<dbReference type="SUPFAM" id="SSF56281">
    <property type="entry name" value="Metallo-hydrolase/oxidoreductase"/>
    <property type="match status" value="1"/>
</dbReference>